<dbReference type="EC" id="3.5.2.9" evidence="1"/>
<dbReference type="EMBL" id="AE005174">
    <property type="protein sequence ID" value="AAG55034.1"/>
    <property type="molecule type" value="Genomic_DNA"/>
</dbReference>
<dbReference type="EMBL" id="BA000007">
    <property type="protein sequence ID" value="BAB34159.1"/>
    <property type="molecule type" value="Genomic_DNA"/>
</dbReference>
<dbReference type="PIR" id="F85571">
    <property type="entry name" value="F85571"/>
</dbReference>
<dbReference type="PIR" id="H90720">
    <property type="entry name" value="H90720"/>
</dbReference>
<dbReference type="RefSeq" id="NP_308763.1">
    <property type="nucleotide sequence ID" value="NC_002695.1"/>
</dbReference>
<dbReference type="RefSeq" id="WP_001188343.1">
    <property type="nucleotide sequence ID" value="NZ_VOAI01000019.1"/>
</dbReference>
<dbReference type="SMR" id="P0AAV5"/>
<dbReference type="STRING" id="155864.Z0862"/>
<dbReference type="GeneID" id="75170700"/>
<dbReference type="GeneID" id="917105"/>
<dbReference type="KEGG" id="ece:Z0862"/>
<dbReference type="KEGG" id="ecs:ECs_0736"/>
<dbReference type="PATRIC" id="fig|386585.9.peg.852"/>
<dbReference type="eggNOG" id="COG2049">
    <property type="taxonomic scope" value="Bacteria"/>
</dbReference>
<dbReference type="HOGENOM" id="CLU_020207_0_0_6"/>
<dbReference type="OMA" id="QPGFAYM"/>
<dbReference type="Proteomes" id="UP000000558">
    <property type="component" value="Chromosome"/>
</dbReference>
<dbReference type="Proteomes" id="UP000002519">
    <property type="component" value="Chromosome"/>
</dbReference>
<dbReference type="GO" id="GO:0017168">
    <property type="term" value="F:5-oxoprolinase (ATP-hydrolyzing) activity"/>
    <property type="evidence" value="ECO:0007669"/>
    <property type="project" value="UniProtKB-EC"/>
</dbReference>
<dbReference type="GO" id="GO:0005524">
    <property type="term" value="F:ATP binding"/>
    <property type="evidence" value="ECO:0007669"/>
    <property type="project" value="UniProtKB-KW"/>
</dbReference>
<dbReference type="Gene3D" id="2.40.100.10">
    <property type="entry name" value="Cyclophilin-like"/>
    <property type="match status" value="1"/>
</dbReference>
<dbReference type="InterPro" id="IPR003833">
    <property type="entry name" value="CT_C_D"/>
</dbReference>
<dbReference type="InterPro" id="IPR029000">
    <property type="entry name" value="Cyclophilin-like_dom_sf"/>
</dbReference>
<dbReference type="InterPro" id="IPR010016">
    <property type="entry name" value="PxpB"/>
</dbReference>
<dbReference type="NCBIfam" id="TIGR00370">
    <property type="entry name" value="5-oxoprolinase subunit PxpB"/>
    <property type="match status" value="1"/>
</dbReference>
<dbReference type="PANTHER" id="PTHR34698">
    <property type="entry name" value="5-OXOPROLINASE SUBUNIT B"/>
    <property type="match status" value="1"/>
</dbReference>
<dbReference type="PANTHER" id="PTHR34698:SF2">
    <property type="entry name" value="5-OXOPROLINASE SUBUNIT B"/>
    <property type="match status" value="1"/>
</dbReference>
<dbReference type="Pfam" id="PF02682">
    <property type="entry name" value="CT_C_D"/>
    <property type="match status" value="1"/>
</dbReference>
<dbReference type="SMART" id="SM00796">
    <property type="entry name" value="AHS1"/>
    <property type="match status" value="1"/>
</dbReference>
<dbReference type="SUPFAM" id="SSF50891">
    <property type="entry name" value="Cyclophilin-like"/>
    <property type="match status" value="1"/>
</dbReference>
<dbReference type="SUPFAM" id="SSF160467">
    <property type="entry name" value="PH0987 N-terminal domain-like"/>
    <property type="match status" value="1"/>
</dbReference>
<keyword id="KW-0067">ATP-binding</keyword>
<keyword id="KW-0378">Hydrolase</keyword>
<keyword id="KW-0547">Nucleotide-binding</keyword>
<keyword id="KW-1185">Reference proteome</keyword>
<feature type="chain" id="PRO_0000168707" description="5-oxoprolinase subunit B">
    <location>
        <begin position="1"/>
        <end position="218"/>
    </location>
</feature>
<sequence>MQRARCYLIGETAVVLELEPPVTLASQKRIWRLAQRLVDMPNVVEAIPGMNNITVILRNPESLALDAIERLQRWWEESEALEPESRFIEIPVVYGGAGGPDLAVVAAHCGLSEKQVVELHSSVEYVVWFLGFQPGFPYLGSLPEQLHTPRRAEPRLLVPAGSVGIGGPQTGVYPLATPGGWQLIGHTSLSLFDPARDEPILLRPGDSVRFVPQKEGVC</sequence>
<gene>
    <name evidence="1" type="primary">pxpB</name>
    <name type="synonym">ybgJ</name>
    <name type="ordered locus">Z0862</name>
    <name type="ordered locus">ECs0736</name>
</gene>
<accession>P0AAV5</accession>
<accession>P75744</accession>
<organism>
    <name type="scientific">Escherichia coli O157:H7</name>
    <dbReference type="NCBI Taxonomy" id="83334"/>
    <lineage>
        <taxon>Bacteria</taxon>
        <taxon>Pseudomonadati</taxon>
        <taxon>Pseudomonadota</taxon>
        <taxon>Gammaproteobacteria</taxon>
        <taxon>Enterobacterales</taxon>
        <taxon>Enterobacteriaceae</taxon>
        <taxon>Escherichia</taxon>
    </lineage>
</organism>
<proteinExistence type="inferred from homology"/>
<name>PXPB_ECO57</name>
<protein>
    <recommendedName>
        <fullName evidence="1">5-oxoprolinase subunit B</fullName>
        <shortName evidence="1">5-OPase subunit B</shortName>
        <ecNumber evidence="1">3.5.2.9</ecNumber>
    </recommendedName>
    <alternativeName>
        <fullName evidence="1">5-oxoprolinase (ATP-hydrolyzing) subunit B</fullName>
    </alternativeName>
</protein>
<evidence type="ECO:0000250" key="1">
    <source>
        <dbReference type="UniProtKB" id="P0AAV4"/>
    </source>
</evidence>
<evidence type="ECO:0000250" key="2">
    <source>
        <dbReference type="UniProtKB" id="P60495"/>
    </source>
</evidence>
<evidence type="ECO:0000305" key="3"/>
<comment type="function">
    <text evidence="1">Catalyzes the cleavage of 5-oxoproline to form L-glutamate coupled to the hydrolysis of ATP to ADP and inorganic phosphate.</text>
</comment>
<comment type="catalytic activity">
    <reaction evidence="1">
        <text>5-oxo-L-proline + ATP + 2 H2O = L-glutamate + ADP + phosphate + H(+)</text>
        <dbReference type="Rhea" id="RHEA:10348"/>
        <dbReference type="ChEBI" id="CHEBI:15377"/>
        <dbReference type="ChEBI" id="CHEBI:15378"/>
        <dbReference type="ChEBI" id="CHEBI:29985"/>
        <dbReference type="ChEBI" id="CHEBI:30616"/>
        <dbReference type="ChEBI" id="CHEBI:43474"/>
        <dbReference type="ChEBI" id="CHEBI:58402"/>
        <dbReference type="ChEBI" id="CHEBI:456216"/>
        <dbReference type="EC" id="3.5.2.9"/>
    </reaction>
</comment>
<comment type="subunit">
    <text evidence="2">Forms a complex composed of PxpA, PxpB and PxpC.</text>
</comment>
<comment type="similarity">
    <text evidence="3">Belongs to the PxpB family.</text>
</comment>
<reference key="1">
    <citation type="journal article" date="2001" name="Nature">
        <title>Genome sequence of enterohaemorrhagic Escherichia coli O157:H7.</title>
        <authorList>
            <person name="Perna N.T."/>
            <person name="Plunkett G. III"/>
            <person name="Burland V."/>
            <person name="Mau B."/>
            <person name="Glasner J.D."/>
            <person name="Rose D.J."/>
            <person name="Mayhew G.F."/>
            <person name="Evans P.S."/>
            <person name="Gregor J."/>
            <person name="Kirkpatrick H.A."/>
            <person name="Posfai G."/>
            <person name="Hackett J."/>
            <person name="Klink S."/>
            <person name="Boutin A."/>
            <person name="Shao Y."/>
            <person name="Miller L."/>
            <person name="Grotbeck E.J."/>
            <person name="Davis N.W."/>
            <person name="Lim A."/>
            <person name="Dimalanta E.T."/>
            <person name="Potamousis K."/>
            <person name="Apodaca J."/>
            <person name="Anantharaman T.S."/>
            <person name="Lin J."/>
            <person name="Yen G."/>
            <person name="Schwartz D.C."/>
            <person name="Welch R.A."/>
            <person name="Blattner F.R."/>
        </authorList>
    </citation>
    <scope>NUCLEOTIDE SEQUENCE [LARGE SCALE GENOMIC DNA]</scope>
    <source>
        <strain>O157:H7 / EDL933 / ATCC 700927 / EHEC</strain>
    </source>
</reference>
<reference key="2">
    <citation type="journal article" date="2001" name="DNA Res.">
        <title>Complete genome sequence of enterohemorrhagic Escherichia coli O157:H7 and genomic comparison with a laboratory strain K-12.</title>
        <authorList>
            <person name="Hayashi T."/>
            <person name="Makino K."/>
            <person name="Ohnishi M."/>
            <person name="Kurokawa K."/>
            <person name="Ishii K."/>
            <person name="Yokoyama K."/>
            <person name="Han C.-G."/>
            <person name="Ohtsubo E."/>
            <person name="Nakayama K."/>
            <person name="Murata T."/>
            <person name="Tanaka M."/>
            <person name="Tobe T."/>
            <person name="Iida T."/>
            <person name="Takami H."/>
            <person name="Honda T."/>
            <person name="Sasakawa C."/>
            <person name="Ogasawara N."/>
            <person name="Yasunaga T."/>
            <person name="Kuhara S."/>
            <person name="Shiba T."/>
            <person name="Hattori M."/>
            <person name="Shinagawa H."/>
        </authorList>
    </citation>
    <scope>NUCLEOTIDE SEQUENCE [LARGE SCALE GENOMIC DNA]</scope>
    <source>
        <strain>O157:H7 / Sakai / RIMD 0509952 / EHEC</strain>
    </source>
</reference>